<sequence length="470" mass="51711">MAGENHQWQGSILYNMLMSAKQTRAAPEAPETRLVDQCWGCSCGDEPGVGREGLLGGRNVALLYRCCFCGKDHPRQGSILYSMLTSAKQTYAAPKAPEATLGPCWGCSCGSDPGVGRTGLPGGRPVALLYRCCFCGENHPRQGSILYSLLTSSKQTHVAPAAPEARPGGAWWDRSYFAQKPGGKEALPGGRATALLYRCCFCGEDHPQQGSTLYCMPTSTNQAQAAPEERPRAPWWDTSSGALRPVALKSPQVVCEAASAGLLKTLRFVKYLPCFQVLPLDQQLVLVRNCWASLLMLELAQDRLQFETVEVSEPSMLQKILTTRRRETGGNEPLPVPTLQPHLAPPAEARKVPSASQVQAIKCFLSKCWSLNISTKEYAYLKGTVLFNPDVPGLQCVKYIQGLQWGTQQILSEHTRMTHQGPHDRFIELNSTLFLLRFINANVIAELFFRPIIGTVSMDDMMLEMLCTKI</sequence>
<proteinExistence type="evidence at transcript level"/>
<comment type="function">
    <text evidence="1 2">Nuclear receptor that lacks a DNA-binding domain and acts as a corepressor that inhibits the transcriptional activity of other nuclear receptors through heterodimeric interactions. Component of a cascade required for the development of the hypothalamic-pituitary-adrenal-gonadal axis (By similarity). May also have a role in the development of the embryo and in the maintenance of embryonic stem cell pluripotency (By similarity).</text>
</comment>
<comment type="subunit">
    <text evidence="1 2">Homodimer. Interacts with NR5A1, NR5A2, NR0B2 and with COPS2 (By similarity). Interacts with ESRRB; represses ESRRB activity at the GATA6 promoter (By similarity).</text>
</comment>
<comment type="subcellular location">
    <subcellularLocation>
        <location evidence="1">Nucleus</location>
    </subcellularLocation>
    <subcellularLocation>
        <location evidence="1">Cytoplasm</location>
    </subcellularLocation>
    <text evidence="1">Shuttles between the cytoplasm and nucleus. Homodimers exits in the cytoplasm and in the nucleus.</text>
</comment>
<comment type="domain">
    <text evidence="1">Homodimerization involved an interaction between amino and carboxy termini involving LXXLL motifs and steroid binding domain (AF-2 motif). Heterodimerizes with NR5A1 and NROB2 through its N-terminal LXXLL motifs.</text>
</comment>
<comment type="similarity">
    <text evidence="4">Belongs to the nuclear hormone receptor family. NR0 subfamily.</text>
</comment>
<dbReference type="EMBL" id="AF322892">
    <property type="protein sequence ID" value="AAK01643.1"/>
    <property type="molecule type" value="mRNA"/>
</dbReference>
<dbReference type="SMR" id="Q9BG97"/>
<dbReference type="STRING" id="9598.ENSPTRP00000047467"/>
<dbReference type="PaxDb" id="9598-ENSPTRP00000047467"/>
<dbReference type="eggNOG" id="KOG3575">
    <property type="taxonomic scope" value="Eukaryota"/>
</dbReference>
<dbReference type="InParanoid" id="Q9BG97"/>
<dbReference type="Proteomes" id="UP000002277">
    <property type="component" value="Unplaced"/>
</dbReference>
<dbReference type="GO" id="GO:0005737">
    <property type="term" value="C:cytoplasm"/>
    <property type="evidence" value="ECO:0000250"/>
    <property type="project" value="UniProtKB"/>
</dbReference>
<dbReference type="GO" id="GO:0016020">
    <property type="term" value="C:membrane"/>
    <property type="evidence" value="ECO:0000250"/>
    <property type="project" value="UniProtKB"/>
</dbReference>
<dbReference type="GO" id="GO:0005654">
    <property type="term" value="C:nucleoplasm"/>
    <property type="evidence" value="ECO:0007669"/>
    <property type="project" value="UniProtKB-ARBA"/>
</dbReference>
<dbReference type="GO" id="GO:0005634">
    <property type="term" value="C:nucleus"/>
    <property type="evidence" value="ECO:0000250"/>
    <property type="project" value="UniProtKB"/>
</dbReference>
<dbReference type="GO" id="GO:0005840">
    <property type="term" value="C:ribosome"/>
    <property type="evidence" value="ECO:0000250"/>
    <property type="project" value="UniProtKB"/>
</dbReference>
<dbReference type="GO" id="GO:0032448">
    <property type="term" value="F:DNA hairpin binding"/>
    <property type="evidence" value="ECO:0000250"/>
    <property type="project" value="UniProtKB"/>
</dbReference>
<dbReference type="GO" id="GO:0016922">
    <property type="term" value="F:nuclear receptor binding"/>
    <property type="evidence" value="ECO:0000250"/>
    <property type="project" value="UniProtKB"/>
</dbReference>
<dbReference type="GO" id="GO:0019904">
    <property type="term" value="F:protein domain specific binding"/>
    <property type="evidence" value="ECO:0000250"/>
    <property type="project" value="UniProtKB"/>
</dbReference>
<dbReference type="GO" id="GO:0042803">
    <property type="term" value="F:protein homodimerization activity"/>
    <property type="evidence" value="ECO:0000250"/>
    <property type="project" value="UniProtKB"/>
</dbReference>
<dbReference type="GO" id="GO:0003723">
    <property type="term" value="F:RNA binding"/>
    <property type="evidence" value="ECO:0000250"/>
    <property type="project" value="UniProtKB"/>
</dbReference>
<dbReference type="GO" id="GO:0003714">
    <property type="term" value="F:transcription corepressor activity"/>
    <property type="evidence" value="ECO:0000318"/>
    <property type="project" value="GO_Central"/>
</dbReference>
<dbReference type="GO" id="GO:0030325">
    <property type="term" value="P:adrenal gland development"/>
    <property type="evidence" value="ECO:0000250"/>
    <property type="project" value="UniProtKB"/>
</dbReference>
<dbReference type="GO" id="GO:0008406">
    <property type="term" value="P:gonad development"/>
    <property type="evidence" value="ECO:0000250"/>
    <property type="project" value="UniProtKB"/>
</dbReference>
<dbReference type="GO" id="GO:0008584">
    <property type="term" value="P:male gonad development"/>
    <property type="evidence" value="ECO:0000250"/>
    <property type="project" value="UniProtKB"/>
</dbReference>
<dbReference type="GO" id="GO:0045892">
    <property type="term" value="P:negative regulation of DNA-templated transcription"/>
    <property type="evidence" value="ECO:0000250"/>
    <property type="project" value="UniProtKB"/>
</dbReference>
<dbReference type="GO" id="GO:0033144">
    <property type="term" value="P:negative regulation of intracellular steroid hormone receptor signaling pathway"/>
    <property type="evidence" value="ECO:0000250"/>
    <property type="project" value="UniProtKB"/>
</dbReference>
<dbReference type="GO" id="GO:0010894">
    <property type="term" value="P:negative regulation of steroid biosynthetic process"/>
    <property type="evidence" value="ECO:0000250"/>
    <property type="project" value="HGNC-UCL"/>
</dbReference>
<dbReference type="GO" id="GO:0000122">
    <property type="term" value="P:negative regulation of transcription by RNA polymerase II"/>
    <property type="evidence" value="ECO:0000318"/>
    <property type="project" value="GO_Central"/>
</dbReference>
<dbReference type="GO" id="GO:0008104">
    <property type="term" value="P:protein localization"/>
    <property type="evidence" value="ECO:0000250"/>
    <property type="project" value="UniProtKB"/>
</dbReference>
<dbReference type="GO" id="GO:0007283">
    <property type="term" value="P:spermatogenesis"/>
    <property type="evidence" value="ECO:0000318"/>
    <property type="project" value="GO_Central"/>
</dbReference>
<dbReference type="CDD" id="cd07350">
    <property type="entry name" value="NR_LBD_Dax1"/>
    <property type="match status" value="1"/>
</dbReference>
<dbReference type="FunFam" id="1.10.565.10:FF:000027">
    <property type="entry name" value="nuclear receptor subfamily 0 group B member 1"/>
    <property type="match status" value="1"/>
</dbReference>
<dbReference type="Gene3D" id="1.10.565.10">
    <property type="entry name" value="Retinoid X Receptor"/>
    <property type="match status" value="1"/>
</dbReference>
<dbReference type="InterPro" id="IPR035500">
    <property type="entry name" value="NHR-like_dom_sf"/>
</dbReference>
<dbReference type="InterPro" id="IPR033544">
    <property type="entry name" value="NR0B1/2"/>
</dbReference>
<dbReference type="InterPro" id="IPR000536">
    <property type="entry name" value="Nucl_hrmn_rcpt_lig-bd"/>
</dbReference>
<dbReference type="InterPro" id="IPR001723">
    <property type="entry name" value="Nuclear_hrmn_rcpt"/>
</dbReference>
<dbReference type="InterPro" id="IPR025900">
    <property type="entry name" value="Nuclear_receptor_repeat"/>
</dbReference>
<dbReference type="PANTHER" id="PTHR24081">
    <property type="entry name" value="NUCLEAR RECEPTOR SUBFAMILY 0 GROUP B"/>
    <property type="match status" value="1"/>
</dbReference>
<dbReference type="PANTHER" id="PTHR24081:SF1">
    <property type="entry name" value="NUCLEAR RECEPTOR SUBFAMILY 0 GROUP B MEMBER 1"/>
    <property type="match status" value="1"/>
</dbReference>
<dbReference type="Pfam" id="PF00104">
    <property type="entry name" value="Hormone_recep"/>
    <property type="match status" value="1"/>
</dbReference>
<dbReference type="Pfam" id="PF14046">
    <property type="entry name" value="NR_Repeat"/>
    <property type="match status" value="4"/>
</dbReference>
<dbReference type="PRINTS" id="PR00398">
    <property type="entry name" value="STRDHORMONER"/>
</dbReference>
<dbReference type="SMART" id="SM00430">
    <property type="entry name" value="HOLI"/>
    <property type="match status" value="1"/>
</dbReference>
<dbReference type="SUPFAM" id="SSF48508">
    <property type="entry name" value="Nuclear receptor ligand-binding domain"/>
    <property type="match status" value="1"/>
</dbReference>
<dbReference type="PROSITE" id="PS51843">
    <property type="entry name" value="NR_LBD"/>
    <property type="match status" value="1"/>
</dbReference>
<keyword id="KW-0963">Cytoplasm</keyword>
<keyword id="KW-0539">Nucleus</keyword>
<keyword id="KW-0675">Receptor</keyword>
<keyword id="KW-1185">Reference proteome</keyword>
<keyword id="KW-0677">Repeat</keyword>
<keyword id="KW-0678">Repressor</keyword>
<keyword id="KW-0804">Transcription</keyword>
<keyword id="KW-0805">Transcription regulation</keyword>
<gene>
    <name type="primary">NR0B1</name>
    <name type="synonym">DAX1</name>
</gene>
<organism>
    <name type="scientific">Pan troglodytes</name>
    <name type="common">Chimpanzee</name>
    <dbReference type="NCBI Taxonomy" id="9598"/>
    <lineage>
        <taxon>Eukaryota</taxon>
        <taxon>Metazoa</taxon>
        <taxon>Chordata</taxon>
        <taxon>Craniata</taxon>
        <taxon>Vertebrata</taxon>
        <taxon>Euteleostomi</taxon>
        <taxon>Mammalia</taxon>
        <taxon>Eutheria</taxon>
        <taxon>Euarchontoglires</taxon>
        <taxon>Primates</taxon>
        <taxon>Haplorrhini</taxon>
        <taxon>Catarrhini</taxon>
        <taxon>Hominidae</taxon>
        <taxon>Pan</taxon>
    </lineage>
</organism>
<protein>
    <recommendedName>
        <fullName>Nuclear receptor subfamily 0 group B member 1</fullName>
    </recommendedName>
    <alternativeName>
        <fullName>Nuclear receptor DAX-1</fullName>
    </alternativeName>
</protein>
<accession>Q9BG97</accession>
<reference key="1">
    <citation type="journal article" date="2001" name="Am. J. Hum. Genet.">
        <title>Primate DAX1, SRY, and SOX9: evolutionary stratification of sex-determination pathway.</title>
        <authorList>
            <person name="Patel M."/>
            <person name="Dorman K.S."/>
            <person name="Zhang Y.-H."/>
            <person name="Huang B.-L."/>
            <person name="Arnold A.P."/>
            <person name="Sinsheimer J.S."/>
            <person name="Vilain E."/>
            <person name="McCabe E.R.B."/>
        </authorList>
    </citation>
    <scope>NUCLEOTIDE SEQUENCE [MRNA]</scope>
</reference>
<name>NR0B1_PANTR</name>
<feature type="chain" id="PRO_0000280117" description="Nuclear receptor subfamily 0 group B member 1">
    <location>
        <begin position="1"/>
        <end position="470"/>
    </location>
</feature>
<feature type="repeat" description="1">
    <location>
        <begin position="1"/>
        <end position="67"/>
    </location>
</feature>
<feature type="repeat" description="2">
    <location>
        <begin position="68"/>
        <end position="133"/>
    </location>
</feature>
<feature type="repeat" description="3">
    <location>
        <begin position="134"/>
        <end position="200"/>
    </location>
</feature>
<feature type="repeat" description="4; truncated">
    <location>
        <begin position="201"/>
        <end position="253"/>
    </location>
</feature>
<feature type="domain" description="NR LBD" evidence="3">
    <location>
        <begin position="205"/>
        <end position="469"/>
    </location>
</feature>
<feature type="region of interest" description="4 X 67 AA tandem repeats">
    <location>
        <begin position="1"/>
        <end position="253"/>
    </location>
</feature>
<feature type="short sequence motif" description="LXXLL motif 1">
    <location>
        <begin position="13"/>
        <end position="17"/>
    </location>
</feature>
<feature type="short sequence motif" description="LXXLL motif 2">
    <location>
        <begin position="80"/>
        <end position="84"/>
    </location>
</feature>
<feature type="short sequence motif" description="LXXLL motif 3">
    <location>
        <begin position="146"/>
        <end position="150"/>
    </location>
</feature>
<feature type="short sequence motif" description="AF-2 motif">
    <location>
        <begin position="461"/>
        <end position="466"/>
    </location>
</feature>
<evidence type="ECO:0000250" key="1">
    <source>
        <dbReference type="UniProtKB" id="P51843"/>
    </source>
</evidence>
<evidence type="ECO:0000250" key="2">
    <source>
        <dbReference type="UniProtKB" id="Q61066"/>
    </source>
</evidence>
<evidence type="ECO:0000255" key="3">
    <source>
        <dbReference type="PROSITE-ProRule" id="PRU01189"/>
    </source>
</evidence>
<evidence type="ECO:0000305" key="4"/>